<reference key="1">
    <citation type="journal article" date="2005" name="Arch. Virol.">
        <title>Complete genome sequences of Chandipura and Isfahan vesiculoviruses.</title>
        <authorList>
            <person name="Marriott A.C."/>
        </authorList>
    </citation>
    <scope>NUCLEOTIDE SEQUENCE [GENOMIC RNA]</scope>
</reference>
<reference key="2">
    <citation type="journal article" date="1989" name="Virology">
        <title>Structure and expression of the glycoprotein gene of Chandipura virus.</title>
        <authorList>
            <person name="Masters P.S."/>
            <person name="Bhella R.S."/>
            <person name="Butcher M."/>
            <person name="Patel B."/>
            <person name="Ghosh H.P."/>
            <person name="Banerjee A.K."/>
        </authorList>
    </citation>
    <scope>NUCLEOTIDE SEQUENCE [GENOMIC RNA] OF 1-11</scope>
</reference>
<reference key="3">
    <citation type="journal article" date="2024" name="Virus Dis.">
        <title>Nucleoside and non-nucleoside reverse transcriptase inhibitor drugs (NRTIs and NNRTIs) are capable of binding Chandipura virus polymerase protein (L) and inhibit virus replication.</title>
        <authorList>
            <person name="Mandal D."/>
            <person name="Pandey D."/>
            <person name="Sarkar D.P."/>
            <person name="Kumar M."/>
        </authorList>
    </citation>
    <scope>ACTIVITY REGULATION</scope>
</reference>
<accession>P13179</accession>
<accession>Q5K2K8</accession>
<comment type="function">
    <text evidence="1 2">Multifunctional enzyme responsible for RNA synthesis (replicase and transcriptase), cap addition, and cap methylation. Also performs the polyadenylation of subgenomic mRNAs by a stuttering mechanism at a slipery stop site present at the end of viral genes. The template is composed of the viral RNA tightly encapsidated by the nucleoprotein (N). L is packaged into virions during assembly and translocates to the 3' leader promoter to initiate transcription after entering the host cells. During transcription and replication of the genome, L does not bind the N-RNA complex directly, but is bridged by its non-catalytic cofactor P, which interacts with L and N oligomers simultaneously (By similarity). In the transcription mode, the polymerase performs the sequential transcription of all mRNAs using a termination-reinitiation mechanism responding to gene start and gene end signals. Some polymerase disengage from the template at each gene junction, resulting in a decreasing abundance of transcripts from the 3' to the 5' end of the genome (By similarity). The first gene is the most transcribed, and the last the least transcribed (By similarity). The viral phosphoprotein helps the polymerase to engage the N-RNA template and acts as a processivity factor. Polyribonucleotidyl transferase (PRNTase) adds the cap structure when the nascent RNA chain length has reached few nucleotides. Ribose 2'-O methylation of viral mRNA cap precedes and facilitates subsequent guanine-N-7 methylation, both activities being carried by the viral polymerase (By similarity). In the replication mode, the polymerase replicates the whole viral genome without recognizing the gene end transcriptional signals (By similarity). The ability of the polymerase to override the gene end signals as it is producing the antigenome is probably due to replicative RNA becoming encapsidated with nucleoprotein as it is synthesized (By similarity).</text>
</comment>
<comment type="catalytic activity">
    <reaction evidence="3">
        <text>RNA(n) + a ribonucleoside 5'-triphosphate = RNA(n+1) + diphosphate</text>
        <dbReference type="Rhea" id="RHEA:21248"/>
        <dbReference type="Rhea" id="RHEA-COMP:14527"/>
        <dbReference type="Rhea" id="RHEA-COMP:17342"/>
        <dbReference type="ChEBI" id="CHEBI:33019"/>
        <dbReference type="ChEBI" id="CHEBI:61557"/>
        <dbReference type="ChEBI" id="CHEBI:140395"/>
        <dbReference type="EC" id="2.7.7.48"/>
    </reaction>
</comment>
<comment type="catalytic activity">
    <reaction evidence="2">
        <text>GTP + H2O = GDP + phosphate + H(+)</text>
        <dbReference type="Rhea" id="RHEA:19669"/>
        <dbReference type="ChEBI" id="CHEBI:15377"/>
        <dbReference type="ChEBI" id="CHEBI:15378"/>
        <dbReference type="ChEBI" id="CHEBI:37565"/>
        <dbReference type="ChEBI" id="CHEBI:43474"/>
        <dbReference type="ChEBI" id="CHEBI:58189"/>
    </reaction>
</comment>
<comment type="catalytic activity">
    <reaction evidence="2">
        <text>a 5'-end triphospho-adenylyl-adenylyl-cytidylyl-adenosine in mRNA + GDP + H(+) = a 5'-end (5'-triphosphoguanosine)-adenylyl-adenylyl-cytidylyl-adenosine in mRNA + diphosphate</text>
        <dbReference type="Rhea" id="RHEA:65436"/>
        <dbReference type="Rhea" id="RHEA-COMP:16797"/>
        <dbReference type="Rhea" id="RHEA-COMP:16799"/>
        <dbReference type="ChEBI" id="CHEBI:15378"/>
        <dbReference type="ChEBI" id="CHEBI:33019"/>
        <dbReference type="ChEBI" id="CHEBI:58189"/>
        <dbReference type="ChEBI" id="CHEBI:156484"/>
        <dbReference type="ChEBI" id="CHEBI:156503"/>
        <dbReference type="EC" id="2.7.7.88"/>
    </reaction>
</comment>
<comment type="catalytic activity">
    <reaction evidence="1">
        <text>a 5'-end (5'-triphosphoguanosine)-adenylyl-adenylyl-cytidylyl-adenosine in mRNA + 2 S-adenosyl-L-methionine = a 5'-end (N(7)-methyl 5'-triphosphoguanosine)-(2'-O-methyladenylyl)-adenylyl-cytidylyl-adenosine in mRNA + 2 S-adenosyl-L-homocysteine + H(+)</text>
        <dbReference type="Rhea" id="RHEA:65376"/>
        <dbReference type="Rhea" id="RHEA-COMP:16797"/>
        <dbReference type="Rhea" id="RHEA-COMP:16798"/>
        <dbReference type="ChEBI" id="CHEBI:15378"/>
        <dbReference type="ChEBI" id="CHEBI:57856"/>
        <dbReference type="ChEBI" id="CHEBI:59789"/>
        <dbReference type="ChEBI" id="CHEBI:156483"/>
        <dbReference type="ChEBI" id="CHEBI:156484"/>
        <dbReference type="EC" id="2.1.1.375"/>
    </reaction>
</comment>
<comment type="catalytic activity">
    <reaction evidence="1">
        <text>a 5'-end (5'-triphosphoguanosine)-adenylyl-adenylyl-cytidylyl-adenosine in mRNA + S-adenosyl-L-methionine = a 5'-end (5'-triphosphoguanosine)-(2'-O-methyladenylyl)-adenylyl-cytidylyl-adenosine in mRNA + S-adenosyl-L-homocysteine + H(+)</text>
        <dbReference type="Rhea" id="RHEA:65380"/>
        <dbReference type="Rhea" id="RHEA-COMP:16797"/>
        <dbReference type="Rhea" id="RHEA-COMP:16801"/>
        <dbReference type="ChEBI" id="CHEBI:15378"/>
        <dbReference type="ChEBI" id="CHEBI:57856"/>
        <dbReference type="ChEBI" id="CHEBI:59789"/>
        <dbReference type="ChEBI" id="CHEBI:156482"/>
        <dbReference type="ChEBI" id="CHEBI:156484"/>
    </reaction>
</comment>
<comment type="catalytic activity">
    <reaction evidence="1">
        <text>a 5'-end (5'-triphosphoguanosine)-(2'-O-methyladenylyl)-adenylyl-cytidylyl-adenosine in mRNA + S-adenosyl-L-methionine = a 5'-end (N(7)-methyl 5'-triphosphoguanosine)-(2'-O-methyladenylyl)-adenylyl-cytidylyl-adenosine in mRNA + S-adenosyl-L-homocysteine</text>
        <dbReference type="Rhea" id="RHEA:65440"/>
        <dbReference type="Rhea" id="RHEA-COMP:16798"/>
        <dbReference type="Rhea" id="RHEA-COMP:16801"/>
        <dbReference type="ChEBI" id="CHEBI:57856"/>
        <dbReference type="ChEBI" id="CHEBI:59789"/>
        <dbReference type="ChEBI" id="CHEBI:156482"/>
        <dbReference type="ChEBI" id="CHEBI:156483"/>
    </reaction>
</comment>
<comment type="activity regulation">
    <text evidence="5">Inhibited by nucleoside and non-nucleoside reverse transcriptase inhibitor (NRTI) drugs: abacavir &gt; nevirapine &gt; tenofovir &gt; AZT.</text>
</comment>
<comment type="subunit">
    <text evidence="1">May form homodimer. Interacts with the P protein; the association of P and L forms the polymerase complex, positions it on the template and allows to package the L polymerase in the virion, since P acts as a bridge between N and L. L binds loosely to N and is further bridged by the P protein, which interacts with L and N oligomers simultaneously.</text>
</comment>
<comment type="subcellular location">
    <subcellularLocation>
        <location evidence="1">Virion</location>
    </subcellularLocation>
    <subcellularLocation>
        <location evidence="1">Host cytoplasm</location>
    </subcellularLocation>
    <text evidence="1">L and P are packaged asymmetrically towards the blunt end of the virus. About 55 copies of L are present in the virion.</text>
</comment>
<comment type="domain">
    <text evidence="1">The RNA-dependent RNA polymerase (RdRp) domain is responsible for the RNA sythesis. The polyribonucleotidyl transferase (PRNTase) domain is responsible for the initiation of transcription at the 3'-end of the genome (priming) and pre-mRNA 5'-capping during start-stop transcription. The methyltransferase (MTase) domain is responsible for the cap methylation.</text>
</comment>
<comment type="similarity">
    <text evidence="6">Belongs to the rhabdoviridae protein L family.</text>
</comment>
<sequence length="2092" mass="238532">MDLNPVDDAAELSEENFFSGKLSKECRIRGLNSVDYNLNSPLVSDDLTYLLDKFKGKPVPIRWKMKKWDSILDQLRKHDLEYLRPSDLHQWFAEWMLYSKHGSKQGEDFLKTVDEEASDTFEVVRSFIRGWTGGEINFVRKSGKHMGYCAELCQKFLDLHKLTLLGNAATDNELLQLSKTFGDDKIYKKRLIKLPSLGRVIFDSGFFIVLDQRVLMDRNFMLMMKDVIIGRMQTVLSMISRCDDKFSSKDIDFLLKVYSTGDKIIRKLGNDGYELIKTVEPMCNLRLSDLARRFRPLIPPFPHFRRHIESTVDELSAKTPLIRELFSLIDTSPNVDSTLVVYGSFRHWGHPFINYFEGLEKLHKQVTMEKEIDTNYSEALASDLARIVLTKEFNEKKQWAVDYHRVPTNHPFKNHIRDNTWPTAAVIQDFGDHWHELPLIQCFDIPDLIDPSIIYSDKSHSMNRSEVLNHVRTKPHTPIPSKKVLESMIDKPATNWLEFLEEIDKNGLSDEDLVIGLKGKERELKIAGRFFSLMSWKLREYFVVTEYLIKTHFVPLFHGLTMADDMTAVIKKMLESSSGQGLTNYESVCIANHIDYEKWNNHQRKLSNGPVFKVMGQFLGYPNLIYRTHEFFEKSLIYYNERPDLMKVKNGILENSTHQRVCWNGQAGGLEGLRQKGWSILNLLVIQREAKIRNTAVKVLAQGDNQVICTQYKTKQYRNDIELRQALNQMAANNDVIMKAIESGTNKLGLLINQDETMQSADYLNYGKVPIFRGVIRGLETKRWSRVTCVTNDQLPTCANLMSSVSTNALTVAHFDVHPLNAMIQFNFFGNFARLLLIMHDPAIRQSLNQLKGPNINVHSYGFKVAMLYLDPSIGGVCGTALSRFLIRSFPDPVTESLSFWKLIHHSTSDIRLKNLSEQFGNPKIAVFRESHIEKLLEDPTSLNISMGMSAANLLKTEIKKNLLQKKSSIGNQIVKDAVYYIHSEDEKLRTFLWSITPLFPRFLSEFKAGTFMGVASSIVSLFQNSRTIRNVFRDYMSQTIDDLIVKSELTSLEHLSNYTDRKGSGGIWGCSAEQADKLRRMSWKRPVLGTTVPHPLEMHGRGTLKSPLSKCCKESRMDYISVHIPEGLNKVLDGRGSLPAYLGSKTSESTSILQPWEKESKIPIIRRATRLRDAIHWFVDPDSNLARSILNNIESLTGEKWEGALKGYKRTGSALHRFSTSRVSHGGFSSQSPACLTRMMATTDTMRDYAQLNYDFMFQASLLYSQMTSSVILMGTTVSNTIHFHVTCRKCIREITEPMLESPREYRGKDVHLVLAKWKNSSNGWGETLQLLKPVEGDWDTIPPVEKSYHVGRILGFLYGDLKSQNSSRADDSSIFPLSIQMRLRGRGFLRGILDGLVRASACQVIHRRSVALLSKPANAIYGGLIYLIDKISASTSFTTLCRDGPIREELSSIPHKIPTSYPTSNSDMGLHIRNYLKFQCKTVELGKYQSDIKDLWLFSDVMTSNIAGPFALSTKILKCLYKPALSQKDRNNIRKISNFSKMMRSQLSWDPTSSEFITSQILVCNEEIRHACKFGIPKLSLKFDDPVWGPEDYGLIWSIPVDYSSQSVPKNLKPCPRIQNPSISGFRLGQLPTGAHYKLRSILRKKNIHYRDALCGGDGSGGMTAAVLRYNLKARAIFNSILDFDGSTMKGASPDPPSALETVVNGRTRCVNAESCWENPSDLSEQRTWDYFKFLKTHHGLKIDLIVLDMEVRDFAISASIEKCVRHNVSSILEEDGVLIYKTYGSTIAAESSNAVVNIGVLFESVELIQTEYSSTSTSEVYMYCRKIKKFVDAPHPDWISLDYYWSKLLCFRSYKEEFFRSYEVSRKESLKGIPNSFIPDPLVNLETLLQIAGVPSGISHQLAIDIKESQLTQITAAMVLCGMIANYTLDVTKKRDSYNPPSDGRLIRMSAALVGISFWISVKYYDKELNFELEQILSRSFPIRWMLSHNYLFWTTKKGFRNAKDVRLSGNMANIGNWIRCMELLHLPPGSLSKDEVTTTCGKYIRNLKYSVILQQTGIIDLWKSRVASDDRSLMEVKTEFIESEHWVD</sequence>
<protein>
    <recommendedName>
        <fullName>RNA-directed RNA polymerase L</fullName>
        <shortName>Protein L</shortName>
    </recommendedName>
    <alternativeName>
        <fullName>Large structural protein</fullName>
    </alternativeName>
    <alternativeName>
        <fullName>Replicase</fullName>
    </alternativeName>
    <alternativeName>
        <fullName>Transcriptase</fullName>
    </alternativeName>
    <domain>
        <recommendedName>
            <fullName>RNA-directed RNA polymerase</fullName>
            <ecNumber evidence="1">2.7.7.48</ecNumber>
        </recommendedName>
    </domain>
    <domain>
        <recommendedName>
            <fullName evidence="2">GTP phosphohydrolase</fullName>
            <ecNumber evidence="2">3.6.1.-</ecNumber>
        </recommendedName>
    </domain>
    <domain>
        <recommendedName>
            <fullName>GDP polyribonucleotidyltransferase</fullName>
            <ecNumber evidence="1">2.7.7.88</ecNumber>
        </recommendedName>
        <alternativeName>
            <fullName evidence="6">PRNTase</fullName>
        </alternativeName>
    </domain>
    <domain>
        <recommendedName>
            <fullName evidence="6">mRNA cap methyltransferase</fullName>
            <ecNumber evidence="1">2.1.1.375</ecNumber>
        </recommendedName>
        <alternativeName>
            <fullName evidence="1">mRNA (guanine-N(7)-)-methyltransferase</fullName>
            <shortName evidence="1">G-N7-MTase</shortName>
        </alternativeName>
        <alternativeName>
            <fullName evidence="1">mRNA (nucleoside-2'-O-)-methyltransferase</fullName>
            <shortName evidence="1">N1-2'-O-MTase</shortName>
        </alternativeName>
    </domain>
</protein>
<organism>
    <name type="scientific">Chandipura virus (strain I653514)</name>
    <name type="common">CHPV</name>
    <dbReference type="NCBI Taxonomy" id="11273"/>
    <lineage>
        <taxon>Viruses</taxon>
        <taxon>Riboviria</taxon>
        <taxon>Orthornavirae</taxon>
        <taxon>Negarnaviricota</taxon>
        <taxon>Haploviricotina</taxon>
        <taxon>Monjiviricetes</taxon>
        <taxon>Mononegavirales</taxon>
        <taxon>Rhabdoviridae</taxon>
        <taxon>Alpharhabdovirinae</taxon>
        <taxon>Vesiculovirus</taxon>
        <taxon>Vesiculovirus chandipura</taxon>
    </lineage>
</organism>
<name>L_CHAV</name>
<keyword id="KW-0067">ATP-binding</keyword>
<keyword id="KW-1035">Host cytoplasm</keyword>
<keyword id="KW-0378">Hydrolase</keyword>
<keyword id="KW-0489">Methyltransferase</keyword>
<keyword id="KW-0506">mRNA capping</keyword>
<keyword id="KW-0507">mRNA processing</keyword>
<keyword id="KW-0511">Multifunctional enzyme</keyword>
<keyword id="KW-0547">Nucleotide-binding</keyword>
<keyword id="KW-0548">Nucleotidyltransferase</keyword>
<keyword id="KW-1185">Reference proteome</keyword>
<keyword id="KW-0696">RNA-directed RNA polymerase</keyword>
<keyword id="KW-0949">S-adenosyl-L-methionine</keyword>
<keyword id="KW-0808">Transferase</keyword>
<keyword id="KW-0693">Viral RNA replication</keyword>
<keyword id="KW-0946">Virion</keyword>
<evidence type="ECO:0000250" key="1">
    <source>
        <dbReference type="UniProtKB" id="P03523"/>
    </source>
</evidence>
<evidence type="ECO:0000250" key="2">
    <source>
        <dbReference type="UniProtKB" id="P28887"/>
    </source>
</evidence>
<evidence type="ECO:0000255" key="3">
    <source>
        <dbReference type="PROSITE-ProRule" id="PRU00539"/>
    </source>
</evidence>
<evidence type="ECO:0000255" key="4">
    <source>
        <dbReference type="PROSITE-ProRule" id="PRU00923"/>
    </source>
</evidence>
<evidence type="ECO:0000269" key="5">
    <source>
    </source>
</evidence>
<evidence type="ECO:0000305" key="6"/>
<feature type="chain" id="PRO_0000222839" description="RNA-directed RNA polymerase L">
    <location>
        <begin position="1"/>
        <end position="2092"/>
    </location>
</feature>
<feature type="domain" description="RdRp catalytic" evidence="3">
    <location>
        <begin position="588"/>
        <end position="774"/>
    </location>
</feature>
<feature type="domain" description="Mononegavirus-type SAM-dependent 2'-O-MTase" evidence="4">
    <location>
        <begin position="1629"/>
        <end position="1826"/>
    </location>
</feature>
<feature type="region of interest" description="Capping domain" evidence="1">
    <location>
        <begin position="856"/>
        <end position="1324"/>
    </location>
</feature>
<feature type="region of interest" description="PRNTase domain" evidence="1">
    <location>
        <begin position="1071"/>
        <end position="1321"/>
    </location>
</feature>
<feature type="region of interest" description="priming-capping loop" evidence="1">
    <location>
        <begin position="1142"/>
        <end position="1179"/>
    </location>
</feature>
<feature type="region of interest" description="Connector domain" evidence="1">
    <location>
        <begin position="1348"/>
        <end position="1547"/>
    </location>
</feature>
<feature type="site" description="Interaction with the phosphoprotein" evidence="1">
    <location>
        <position position="694"/>
    </location>
</feature>
<feature type="site" description="Important for escaping from the 3'-terminal leader promotter followed by the formation of a stable leaderRNA elongation complex" evidence="1">
    <location>
        <position position="1173"/>
    </location>
</feature>
<feature type="site" description="Interaction with the phosphoprotein" evidence="1">
    <location>
        <position position="1409"/>
    </location>
</feature>
<feature type="site" description="Interaction with the phosphoprotein" evidence="1">
    <location>
        <position position="1417"/>
    </location>
</feature>
<feature type="site" description="Interaction with the phosphoprotein" evidence="1">
    <location>
        <position position="1486"/>
    </location>
</feature>
<feature type="site" description="Interaction with the phosphoprotein" evidence="1">
    <location>
        <position position="1900"/>
    </location>
</feature>
<feature type="site" description="Interaction with the phosphoprotein" evidence="1">
    <location>
        <position position="1969"/>
    </location>
</feature>
<feature type="site" description="Interaction with the phosphoprotein" evidence="1">
    <location>
        <position position="2007"/>
    </location>
</feature>
<feature type="site" description="Interaction with the phosphoprotein" evidence="1">
    <location>
        <position position="2080"/>
    </location>
</feature>
<feature type="site" description="Interaction with the phosphoprotein" evidence="1">
    <location>
        <position position="2081"/>
    </location>
</feature>
<organismHost>
    <name type="scientific">Homo sapiens</name>
    <name type="common">Human</name>
    <dbReference type="NCBI Taxonomy" id="9606"/>
</organismHost>
<organismHost>
    <name type="scientific">Phlebotominae</name>
    <name type="common">sandflies</name>
    <dbReference type="NCBI Taxonomy" id="7198"/>
</organismHost>
<dbReference type="EC" id="2.7.7.48" evidence="1"/>
<dbReference type="EC" id="3.6.1.-" evidence="2"/>
<dbReference type="EC" id="2.7.7.88" evidence="1"/>
<dbReference type="EC" id="2.1.1.375" evidence="1"/>
<dbReference type="EMBL" id="AJ810083">
    <property type="protein sequence ID" value="CAH17543.1"/>
    <property type="molecule type" value="Genomic_RNA"/>
</dbReference>
<dbReference type="EMBL" id="J04350">
    <property type="protein sequence ID" value="AAA42917.1"/>
    <property type="molecule type" value="Genomic_RNA"/>
</dbReference>
<dbReference type="SMR" id="P13179"/>
<dbReference type="BRENDA" id="2.7.7.88">
    <property type="organism ID" value="14215"/>
</dbReference>
<dbReference type="Proteomes" id="UP000008448">
    <property type="component" value="Genome"/>
</dbReference>
<dbReference type="GO" id="GO:0030430">
    <property type="term" value="C:host cell cytoplasm"/>
    <property type="evidence" value="ECO:0007669"/>
    <property type="project" value="UniProtKB-SubCell"/>
</dbReference>
<dbReference type="GO" id="GO:0044423">
    <property type="term" value="C:virion component"/>
    <property type="evidence" value="ECO:0007669"/>
    <property type="project" value="UniProtKB-KW"/>
</dbReference>
<dbReference type="GO" id="GO:0005524">
    <property type="term" value="F:ATP binding"/>
    <property type="evidence" value="ECO:0007669"/>
    <property type="project" value="UniProtKB-KW"/>
</dbReference>
<dbReference type="GO" id="GO:0003924">
    <property type="term" value="F:GTPase activity"/>
    <property type="evidence" value="ECO:0007669"/>
    <property type="project" value="RHEA"/>
</dbReference>
<dbReference type="GO" id="GO:0004482">
    <property type="term" value="F:mRNA 5'-cap (guanine-N7-)-methyltransferase activity"/>
    <property type="evidence" value="ECO:0007669"/>
    <property type="project" value="InterPro"/>
</dbReference>
<dbReference type="GO" id="GO:0003968">
    <property type="term" value="F:RNA-directed RNA polymerase activity"/>
    <property type="evidence" value="ECO:0007669"/>
    <property type="project" value="UniProtKB-KW"/>
</dbReference>
<dbReference type="GO" id="GO:0039689">
    <property type="term" value="P:negative stranded viral RNA replication"/>
    <property type="evidence" value="ECO:0000250"/>
    <property type="project" value="UniProtKB"/>
</dbReference>
<dbReference type="FunFam" id="3.40.50.150:FF:000473">
    <property type="entry name" value="RNA-directed RNA polymerase L"/>
    <property type="match status" value="1"/>
</dbReference>
<dbReference type="Gene3D" id="3.40.50.150">
    <property type="entry name" value="Vaccinia Virus protein VP39"/>
    <property type="match status" value="1"/>
</dbReference>
<dbReference type="InterPro" id="IPR039530">
    <property type="entry name" value="L_methyltransferase_rhabdo"/>
</dbReference>
<dbReference type="InterPro" id="IPR039736">
    <property type="entry name" value="L_poly_C"/>
</dbReference>
<dbReference type="InterPro" id="IPR048398">
    <property type="entry name" value="Methyltrans_Mon_C"/>
</dbReference>
<dbReference type="InterPro" id="IPR048397">
    <property type="entry name" value="Methyltrans_Mon_CD"/>
</dbReference>
<dbReference type="InterPro" id="IPR026890">
    <property type="entry name" value="Mononeg_mRNAcap"/>
</dbReference>
<dbReference type="InterPro" id="IPR014023">
    <property type="entry name" value="Mononeg_RNA_pol_cat"/>
</dbReference>
<dbReference type="InterPro" id="IPR025786">
    <property type="entry name" value="Mononega_L_MeTrfase"/>
</dbReference>
<dbReference type="InterPro" id="IPR017234">
    <property type="entry name" value="RNA-dir_pol_rhabdovirus"/>
</dbReference>
<dbReference type="InterPro" id="IPR029063">
    <property type="entry name" value="SAM-dependent_MTases_sf"/>
</dbReference>
<dbReference type="NCBIfam" id="TIGR04198">
    <property type="entry name" value="paramyx_RNAcap"/>
    <property type="match status" value="1"/>
</dbReference>
<dbReference type="Pfam" id="PF21080">
    <property type="entry name" value="Methyltrans_Mon_1st"/>
    <property type="match status" value="1"/>
</dbReference>
<dbReference type="Pfam" id="PF14314">
    <property type="entry name" value="Methyltrans_Mon_2nd"/>
    <property type="match status" value="1"/>
</dbReference>
<dbReference type="Pfam" id="PF21081">
    <property type="entry name" value="Methyltrans_Mon_3rd"/>
    <property type="match status" value="1"/>
</dbReference>
<dbReference type="Pfam" id="PF14318">
    <property type="entry name" value="Mononeg_mRNAcap"/>
    <property type="match status" value="1"/>
</dbReference>
<dbReference type="Pfam" id="PF00946">
    <property type="entry name" value="Mononeg_RNA_pol"/>
    <property type="match status" value="1"/>
</dbReference>
<dbReference type="PIRSF" id="PIRSF037546">
    <property type="entry name" value="RNA_pol_RhabdoV_sub"/>
    <property type="match status" value="1"/>
</dbReference>
<dbReference type="PROSITE" id="PS50526">
    <property type="entry name" value="RDRP_SSRNA_NEG_NONSEG"/>
    <property type="match status" value="1"/>
</dbReference>
<dbReference type="PROSITE" id="PS51590">
    <property type="entry name" value="SAM_MT_MNV_L"/>
    <property type="match status" value="1"/>
</dbReference>
<gene>
    <name type="primary">L</name>
</gene>
<proteinExistence type="inferred from homology"/>